<comment type="function">
    <text evidence="1">IGPS catalyzes the conversion of PRFAR and glutamine to IGP, AICAR and glutamate. The HisF subunit catalyzes the cyclization activity that produces IGP and AICAR from PRFAR using the ammonia provided by the HisH subunit.</text>
</comment>
<comment type="catalytic activity">
    <reaction evidence="1">
        <text>5-[(5-phospho-1-deoxy-D-ribulos-1-ylimino)methylamino]-1-(5-phospho-beta-D-ribosyl)imidazole-4-carboxamide + L-glutamine = D-erythro-1-(imidazol-4-yl)glycerol 3-phosphate + 5-amino-1-(5-phospho-beta-D-ribosyl)imidazole-4-carboxamide + L-glutamate + H(+)</text>
        <dbReference type="Rhea" id="RHEA:24793"/>
        <dbReference type="ChEBI" id="CHEBI:15378"/>
        <dbReference type="ChEBI" id="CHEBI:29985"/>
        <dbReference type="ChEBI" id="CHEBI:58278"/>
        <dbReference type="ChEBI" id="CHEBI:58359"/>
        <dbReference type="ChEBI" id="CHEBI:58475"/>
        <dbReference type="ChEBI" id="CHEBI:58525"/>
        <dbReference type="EC" id="4.3.2.10"/>
    </reaction>
</comment>
<comment type="pathway">
    <text evidence="1">Amino-acid biosynthesis; L-histidine biosynthesis; L-histidine from 5-phospho-alpha-D-ribose 1-diphosphate: step 5/9.</text>
</comment>
<comment type="subunit">
    <text evidence="1">Heterodimer of HisH and HisF.</text>
</comment>
<comment type="subcellular location">
    <subcellularLocation>
        <location evidence="1">Cytoplasm</location>
    </subcellularLocation>
</comment>
<comment type="similarity">
    <text evidence="1">Belongs to the HisA/HisF family.</text>
</comment>
<keyword id="KW-0028">Amino-acid biosynthesis</keyword>
<keyword id="KW-0963">Cytoplasm</keyword>
<keyword id="KW-0368">Histidine biosynthesis</keyword>
<keyword id="KW-0456">Lyase</keyword>
<keyword id="KW-1185">Reference proteome</keyword>
<accession>A7MHE1</accession>
<reference key="1">
    <citation type="journal article" date="2010" name="PLoS ONE">
        <title>Genome sequence of Cronobacter sakazakii BAA-894 and comparative genomic hybridization analysis with other Cronobacter species.</title>
        <authorList>
            <person name="Kucerova E."/>
            <person name="Clifton S.W."/>
            <person name="Xia X.Q."/>
            <person name="Long F."/>
            <person name="Porwollik S."/>
            <person name="Fulton L."/>
            <person name="Fronick C."/>
            <person name="Minx P."/>
            <person name="Kyung K."/>
            <person name="Warren W."/>
            <person name="Fulton R."/>
            <person name="Feng D."/>
            <person name="Wollam A."/>
            <person name="Shah N."/>
            <person name="Bhonagiri V."/>
            <person name="Nash W.E."/>
            <person name="Hallsworth-Pepin K."/>
            <person name="Wilson R.K."/>
            <person name="McClelland M."/>
            <person name="Forsythe S.J."/>
        </authorList>
    </citation>
    <scope>NUCLEOTIDE SEQUENCE [LARGE SCALE GENOMIC DNA]</scope>
    <source>
        <strain>ATCC BAA-894</strain>
    </source>
</reference>
<organism>
    <name type="scientific">Cronobacter sakazakii (strain ATCC BAA-894)</name>
    <name type="common">Enterobacter sakazakii</name>
    <dbReference type="NCBI Taxonomy" id="290339"/>
    <lineage>
        <taxon>Bacteria</taxon>
        <taxon>Pseudomonadati</taxon>
        <taxon>Pseudomonadota</taxon>
        <taxon>Gammaproteobacteria</taxon>
        <taxon>Enterobacterales</taxon>
        <taxon>Enterobacteriaceae</taxon>
        <taxon>Cronobacter</taxon>
    </lineage>
</organism>
<protein>
    <recommendedName>
        <fullName evidence="1">Imidazole glycerol phosphate synthase subunit HisF</fullName>
        <ecNumber evidence="1">4.3.2.10</ecNumber>
    </recommendedName>
    <alternativeName>
        <fullName evidence="1">IGP synthase cyclase subunit</fullName>
    </alternativeName>
    <alternativeName>
        <fullName evidence="1">IGP synthase subunit HisF</fullName>
    </alternativeName>
    <alternativeName>
        <fullName evidence="1">ImGP synthase subunit HisF</fullName>
        <shortName evidence="1">IGPS subunit HisF</shortName>
    </alternativeName>
</protein>
<dbReference type="EC" id="4.3.2.10" evidence="1"/>
<dbReference type="EMBL" id="CP000783">
    <property type="protein sequence ID" value="ABU76459.1"/>
    <property type="molecule type" value="Genomic_DNA"/>
</dbReference>
<dbReference type="RefSeq" id="WP_012124346.1">
    <property type="nucleotide sequence ID" value="NC_009778.1"/>
</dbReference>
<dbReference type="SMR" id="A7MHE1"/>
<dbReference type="KEGG" id="esa:ESA_01192"/>
<dbReference type="PATRIC" id="fig|290339.8.peg.1058"/>
<dbReference type="HOGENOM" id="CLU_048577_4_0_6"/>
<dbReference type="UniPathway" id="UPA00031">
    <property type="reaction ID" value="UER00010"/>
</dbReference>
<dbReference type="Proteomes" id="UP000000260">
    <property type="component" value="Chromosome"/>
</dbReference>
<dbReference type="GO" id="GO:0005737">
    <property type="term" value="C:cytoplasm"/>
    <property type="evidence" value="ECO:0007669"/>
    <property type="project" value="UniProtKB-SubCell"/>
</dbReference>
<dbReference type="GO" id="GO:0000107">
    <property type="term" value="F:imidazoleglycerol-phosphate synthase activity"/>
    <property type="evidence" value="ECO:0007669"/>
    <property type="project" value="UniProtKB-UniRule"/>
</dbReference>
<dbReference type="GO" id="GO:0016829">
    <property type="term" value="F:lyase activity"/>
    <property type="evidence" value="ECO:0007669"/>
    <property type="project" value="UniProtKB-KW"/>
</dbReference>
<dbReference type="GO" id="GO:0000105">
    <property type="term" value="P:L-histidine biosynthetic process"/>
    <property type="evidence" value="ECO:0007669"/>
    <property type="project" value="UniProtKB-UniRule"/>
</dbReference>
<dbReference type="CDD" id="cd04731">
    <property type="entry name" value="HisF"/>
    <property type="match status" value="1"/>
</dbReference>
<dbReference type="FunFam" id="3.20.20.70:FF:000006">
    <property type="entry name" value="Imidazole glycerol phosphate synthase subunit HisF"/>
    <property type="match status" value="1"/>
</dbReference>
<dbReference type="Gene3D" id="3.20.20.70">
    <property type="entry name" value="Aldolase class I"/>
    <property type="match status" value="1"/>
</dbReference>
<dbReference type="HAMAP" id="MF_01013">
    <property type="entry name" value="HisF"/>
    <property type="match status" value="1"/>
</dbReference>
<dbReference type="InterPro" id="IPR013785">
    <property type="entry name" value="Aldolase_TIM"/>
</dbReference>
<dbReference type="InterPro" id="IPR006062">
    <property type="entry name" value="His_biosynth"/>
</dbReference>
<dbReference type="InterPro" id="IPR004651">
    <property type="entry name" value="HisF"/>
</dbReference>
<dbReference type="InterPro" id="IPR050064">
    <property type="entry name" value="IGPS_HisA/HisF"/>
</dbReference>
<dbReference type="InterPro" id="IPR011060">
    <property type="entry name" value="RibuloseP-bd_barrel"/>
</dbReference>
<dbReference type="NCBIfam" id="TIGR00735">
    <property type="entry name" value="hisF"/>
    <property type="match status" value="1"/>
</dbReference>
<dbReference type="PANTHER" id="PTHR21235:SF2">
    <property type="entry name" value="IMIDAZOLE GLYCEROL PHOSPHATE SYNTHASE HISHF"/>
    <property type="match status" value="1"/>
</dbReference>
<dbReference type="PANTHER" id="PTHR21235">
    <property type="entry name" value="IMIDAZOLE GLYCEROL PHOSPHATE SYNTHASE SUBUNIT HISF/H IGP SYNTHASE SUBUNIT HISF/H"/>
    <property type="match status" value="1"/>
</dbReference>
<dbReference type="Pfam" id="PF00977">
    <property type="entry name" value="His_biosynth"/>
    <property type="match status" value="1"/>
</dbReference>
<dbReference type="SUPFAM" id="SSF51366">
    <property type="entry name" value="Ribulose-phoshate binding barrel"/>
    <property type="match status" value="1"/>
</dbReference>
<sequence>MLAKRIIPCLDVRDGQVVKGVQFRNHEIIGDIVPLAKRYAEEGADELVFYDITASSDGRVVDKSWVTRVAEVIDIPFCVAGGIKTLEDAAQILSFGADKISVNSPALADPTLITRLADRFGVQCIVVGIDTWFDEETGKYHVNQYTGDESRTRVTQWETLDWVREVQQRGAGEIVLNMMNQDGVRNGYDLVQLKKVREACRVPLIASGGAGTMEHFLDAFREANVDGALAASVFHKQIINIGELKAFLAQQGVEIRVC</sequence>
<evidence type="ECO:0000255" key="1">
    <source>
        <dbReference type="HAMAP-Rule" id="MF_01013"/>
    </source>
</evidence>
<proteinExistence type="inferred from homology"/>
<name>HIS6_CROS8</name>
<gene>
    <name evidence="1" type="primary">hisF</name>
    <name type="ordered locus">ESA_01192</name>
</gene>
<feature type="chain" id="PRO_1000063061" description="Imidazole glycerol phosphate synthase subunit HisF">
    <location>
        <begin position="1"/>
        <end position="258"/>
    </location>
</feature>
<feature type="active site" evidence="1">
    <location>
        <position position="11"/>
    </location>
</feature>
<feature type="active site" evidence="1">
    <location>
        <position position="130"/>
    </location>
</feature>